<protein>
    <recommendedName>
        <fullName>Transcription antiterminator LacT</fullName>
    </recommendedName>
</protein>
<reference key="1">
    <citation type="journal article" date="1997" name="J. Bacteriol.">
        <title>The lac operon of Lactobacillus casei contains lacT, a gene coding for a protein of the BglG family of transcriptional antiterminators.</title>
        <authorList>
            <person name="Alpert C.-A."/>
            <person name="Siebers U."/>
        </authorList>
    </citation>
    <scope>NUCLEOTIDE SEQUENCE [GENOMIC DNA]</scope>
    <source>
        <strain>64H</strain>
    </source>
</reference>
<reference key="2">
    <citation type="journal article" date="1997" name="FEMS Microbiol. Lett.">
        <title>Establishing a model to study the regulation of the lactose operon in Lactobacillus casei.</title>
        <authorList>
            <person name="Gosalbes M.J."/>
            <person name="Monedero V."/>
            <person name="Alpert C.-A."/>
            <person name="Perez-Martinez G."/>
        </authorList>
    </citation>
    <scope>NUCLEOTIDE SEQUENCE [GENOMIC DNA]</scope>
    <source>
        <strain>ATCC 393 / DSM 20011 / JCM 1134 / BCRC 10697 / CCUG 21451 / NBRC 15883 / NCIMB 11970 / NCDO 161 / WDCM 00100</strain>
    </source>
</reference>
<reference key="3">
    <citation type="journal article" date="1990" name="J. Biol. Chem.">
        <title>Molecular cloning and DNA sequence of lacE, the gene encoding the lactose-specific enzyme II of the phosphotransferase system of Lactobacillus casei. Evidence that a cysteine residue is essential for sugar phosphorylation.</title>
        <authorList>
            <person name="Alpert C.-A."/>
            <person name="Chassy B.M."/>
        </authorList>
    </citation>
    <scope>NUCLEOTIDE SEQUENCE [GENOMIC DNA] OF 218-292</scope>
</reference>
<name>LACT_LACCA</name>
<organism>
    <name type="scientific">Lacticaseibacillus casei</name>
    <name type="common">Lactobacillus casei</name>
    <dbReference type="NCBI Taxonomy" id="1582"/>
    <lineage>
        <taxon>Bacteria</taxon>
        <taxon>Bacillati</taxon>
        <taxon>Bacillota</taxon>
        <taxon>Bacilli</taxon>
        <taxon>Lactobacillales</taxon>
        <taxon>Lactobacillaceae</taxon>
        <taxon>Lacticaseibacillus</taxon>
    </lineage>
</organism>
<dbReference type="EMBL" id="U21391">
    <property type="protein sequence ID" value="AAB49331.1"/>
    <property type="molecule type" value="Genomic_DNA"/>
</dbReference>
<dbReference type="EMBL" id="Z80834">
    <property type="protein sequence ID" value="CAB02555.1"/>
    <property type="molecule type" value="Genomic_DNA"/>
</dbReference>
<dbReference type="EMBL" id="M60851">
    <property type="protein sequence ID" value="AAA72983.1"/>
    <property type="molecule type" value="Genomic_DNA"/>
</dbReference>
<dbReference type="PIR" id="A23697">
    <property type="entry name" value="A23697"/>
</dbReference>
<dbReference type="RefSeq" id="WP_003589800.1">
    <property type="nucleotide sequence ID" value="NZ_JAJPDP010000008.1"/>
</dbReference>
<dbReference type="SMR" id="P24401"/>
<dbReference type="STRING" id="1582.AAW28_06685"/>
<dbReference type="eggNOG" id="COG3711">
    <property type="taxonomic scope" value="Bacteria"/>
</dbReference>
<dbReference type="GO" id="GO:0003723">
    <property type="term" value="F:RNA binding"/>
    <property type="evidence" value="ECO:0007669"/>
    <property type="project" value="UniProtKB-KW"/>
</dbReference>
<dbReference type="GO" id="GO:0045893">
    <property type="term" value="P:positive regulation of DNA-templated transcription"/>
    <property type="evidence" value="ECO:0007669"/>
    <property type="project" value="InterPro"/>
</dbReference>
<dbReference type="Gene3D" id="2.30.24.10">
    <property type="entry name" value="CAT RNA-binding domain"/>
    <property type="match status" value="1"/>
</dbReference>
<dbReference type="Gene3D" id="1.10.1790.10">
    <property type="entry name" value="PRD domain"/>
    <property type="match status" value="2"/>
</dbReference>
<dbReference type="InterPro" id="IPR053665">
    <property type="entry name" value="Antiterminator_BglG"/>
</dbReference>
<dbReference type="InterPro" id="IPR050661">
    <property type="entry name" value="BglG_antiterminators"/>
</dbReference>
<dbReference type="InterPro" id="IPR004341">
    <property type="entry name" value="CAT_RNA-bd_dom"/>
</dbReference>
<dbReference type="InterPro" id="IPR036650">
    <property type="entry name" value="CAT_RNA-bd_dom_sf"/>
</dbReference>
<dbReference type="InterPro" id="IPR011608">
    <property type="entry name" value="PRD"/>
</dbReference>
<dbReference type="InterPro" id="IPR036634">
    <property type="entry name" value="PRD_sf"/>
</dbReference>
<dbReference type="InterPro" id="IPR001550">
    <property type="entry name" value="Transcrpt_antitermin_CS"/>
</dbReference>
<dbReference type="NCBIfam" id="NF041678">
    <property type="entry name" value="trans_antitermLacT"/>
    <property type="match status" value="1"/>
</dbReference>
<dbReference type="PANTHER" id="PTHR30185">
    <property type="entry name" value="CRYPTIC BETA-GLUCOSIDE BGL OPERON ANTITERMINATOR"/>
    <property type="match status" value="1"/>
</dbReference>
<dbReference type="PANTHER" id="PTHR30185:SF15">
    <property type="entry name" value="CRYPTIC BETA-GLUCOSIDE BGL OPERON ANTITERMINATOR"/>
    <property type="match status" value="1"/>
</dbReference>
<dbReference type="Pfam" id="PF03123">
    <property type="entry name" value="CAT_RBD"/>
    <property type="match status" value="1"/>
</dbReference>
<dbReference type="Pfam" id="PF00874">
    <property type="entry name" value="PRD"/>
    <property type="match status" value="2"/>
</dbReference>
<dbReference type="SMART" id="SM01061">
    <property type="entry name" value="CAT_RBD"/>
    <property type="match status" value="1"/>
</dbReference>
<dbReference type="SUPFAM" id="SSF63520">
    <property type="entry name" value="PTS-regulatory domain, PRD"/>
    <property type="match status" value="2"/>
</dbReference>
<dbReference type="SUPFAM" id="SSF50151">
    <property type="entry name" value="SacY-like RNA-binding domain"/>
    <property type="match status" value="1"/>
</dbReference>
<dbReference type="PROSITE" id="PS00654">
    <property type="entry name" value="PRD_1"/>
    <property type="match status" value="1"/>
</dbReference>
<dbReference type="PROSITE" id="PS51372">
    <property type="entry name" value="PRD_2"/>
    <property type="match status" value="2"/>
</dbReference>
<gene>
    <name type="primary">lacT</name>
</gene>
<keyword id="KW-0010">Activator</keyword>
<keyword id="KW-0677">Repeat</keyword>
<keyword id="KW-0694">RNA-binding</keyword>
<keyword id="KW-0804">Transcription</keyword>
<keyword id="KW-0805">Transcription regulation</keyword>
<sequence length="292" mass="33943">MPKIAQIFNNNVALVDLDNRGQAVVRGRGIAFQKRRGDVIPTKQIEKIFYLANETSRQNLYFLLKNIPIDVVTTTYEIIDVAQKQYRLKVLDYIYITLSDHIYEAYKRYQAGTYQETMVPDFHIQYPAEYAVAKQALQIIATNLGVQFPQSEIKNLALHFINASGEDDGEQVFGKSNEASLSQLVQEVLKRHHITRSHSNGNYYDRFMIHLQYLIDRLQRVDTYAVTIVPEVATELKQNYPQSYKIASEIFDEIKDQLYRSMSEDERLYFIIHIQRLINEAPAQNHSQNDSL</sequence>
<proteinExistence type="inferred from homology"/>
<feature type="chain" id="PRO_0000204246" description="Transcription antiterminator LacT">
    <location>
        <begin position="1"/>
        <end position="292"/>
    </location>
</feature>
<feature type="domain" description="PRD 1" evidence="1">
    <location>
        <begin position="66"/>
        <end position="170"/>
    </location>
</feature>
<feature type="domain" description="PRD 2" evidence="1">
    <location>
        <begin position="172"/>
        <end position="284"/>
    </location>
</feature>
<evidence type="ECO:0000255" key="1">
    <source>
        <dbReference type="PROSITE-ProRule" id="PRU00704"/>
    </source>
</evidence>
<evidence type="ECO:0000305" key="2"/>
<comment type="function">
    <text>Mediates positive regulation of the lac operon by functioning as an antiterminator factor of transcription.</text>
</comment>
<comment type="similarity">
    <text evidence="2">Belongs to the transcriptional antiterminator BglG family.</text>
</comment>
<accession>P24401</accession>